<keyword id="KW-0012">Acyltransferase</keyword>
<keyword id="KW-0732">Signal</keyword>
<keyword id="KW-0808">Transferase</keyword>
<keyword id="KW-0865">Zymogen</keyword>
<feature type="signal peptide" description="Tat-type signal" evidence="2">
    <location>
        <begin position="1"/>
        <end position="29"/>
    </location>
</feature>
<feature type="propeptide" id="PRO_0000033658" evidence="1">
    <location>
        <begin position="30"/>
        <end position="85"/>
    </location>
</feature>
<feature type="chain" id="PRO_0000033659" description="Protein-glutamine gamma-glutamyltransferase" evidence="2">
    <location>
        <begin position="86"/>
        <end position="416"/>
    </location>
</feature>
<feature type="region of interest" description="Disordered" evidence="3">
    <location>
        <begin position="64"/>
        <end position="103"/>
    </location>
</feature>
<feature type="region of interest" description="Disordered" evidence="3">
    <location>
        <begin position="290"/>
        <end position="331"/>
    </location>
</feature>
<feature type="compositionally biased region" description="Low complexity" evidence="3">
    <location>
        <begin position="76"/>
        <end position="85"/>
    </location>
</feature>
<feature type="compositionally biased region" description="Basic and acidic residues" evidence="3">
    <location>
        <begin position="86"/>
        <end position="103"/>
    </location>
</feature>
<feature type="compositionally biased region" description="Basic and acidic residues" evidence="3">
    <location>
        <begin position="295"/>
        <end position="309"/>
    </location>
</feature>
<feature type="active site" evidence="1">
    <location>
        <position position="149"/>
    </location>
</feature>
<feature type="active site" evidence="1">
    <location>
        <position position="340"/>
    </location>
</feature>
<feature type="active site" evidence="1">
    <location>
        <position position="359"/>
    </location>
</feature>
<comment type="function">
    <text evidence="1">Catalyzes the cross-linking of proteins and the conjugation of polyamines to proteins.</text>
</comment>
<comment type="catalytic activity">
    <reaction>
        <text>L-glutaminyl-[protein] + L-lysyl-[protein] = [protein]-L-lysyl-N(6)-5-L-glutamyl-[protein] + NH4(+)</text>
        <dbReference type="Rhea" id="RHEA:54816"/>
        <dbReference type="Rhea" id="RHEA-COMP:9752"/>
        <dbReference type="Rhea" id="RHEA-COMP:10207"/>
        <dbReference type="Rhea" id="RHEA-COMP:14005"/>
        <dbReference type="ChEBI" id="CHEBI:28938"/>
        <dbReference type="ChEBI" id="CHEBI:29969"/>
        <dbReference type="ChEBI" id="CHEBI:30011"/>
        <dbReference type="ChEBI" id="CHEBI:138370"/>
        <dbReference type="EC" id="2.3.2.13"/>
    </reaction>
</comment>
<comment type="PTM">
    <text>Predicted to be exported by the Tat system. The position of the signal peptide cleavage has not been experimentally proven.</text>
</comment>
<comment type="similarity">
    <text evidence="4">Belongs to the bacterial TGase family.</text>
</comment>
<name>TGAS_STRCJ</name>
<reference key="1">
    <citation type="submission" date="2002-05" db="EMBL/GenBank/DDBJ databases">
        <title>Streptoverticillium cinnamoneum IFO12852 TGase gene.</title>
        <authorList>
            <person name="Yokoyama K."/>
        </authorList>
    </citation>
    <scope>NUCLEOTIDE SEQUENCE [GENOMIC DNA]</scope>
    <source>
        <strain>ATCC 11874 / DSM 40005 / NBRC 12852 / JCM 4633 / NCIMB 8851 / NRRL B-1285 / VKM Ac-876</strain>
    </source>
</reference>
<organism>
    <name type="scientific">Streptomyces cinnamoneus</name>
    <name type="common">Streptoverticillium cinnamoneum</name>
    <dbReference type="NCBI Taxonomy" id="53446"/>
    <lineage>
        <taxon>Bacteria</taxon>
        <taxon>Bacillati</taxon>
        <taxon>Actinomycetota</taxon>
        <taxon>Actinomycetes</taxon>
        <taxon>Kitasatosporales</taxon>
        <taxon>Streptomycetaceae</taxon>
        <taxon>Streptomyces</taxon>
        <taxon>Streptomyces cinnamoneus group</taxon>
    </lineage>
</organism>
<dbReference type="EC" id="2.3.2.13"/>
<dbReference type="EMBL" id="AB085698">
    <property type="protein sequence ID" value="BAC24766.1"/>
    <property type="molecule type" value="Genomic_DNA"/>
</dbReference>
<dbReference type="RefSeq" id="WP_190109451.1">
    <property type="nucleotide sequence ID" value="NZ_BMVB01000005.1"/>
</dbReference>
<dbReference type="SMR" id="Q8GR90"/>
<dbReference type="BRENDA" id="2.3.2.13">
    <property type="organism ID" value="5995"/>
</dbReference>
<dbReference type="GO" id="GO:0003810">
    <property type="term" value="F:protein-glutamine gamma-glutamyltransferase activity"/>
    <property type="evidence" value="ECO:0007669"/>
    <property type="project" value="UniProtKB-EC"/>
</dbReference>
<dbReference type="Gene3D" id="3.90.1360.10">
    <property type="entry name" value="Protein-glutamine gamma-glutamyltransferase"/>
    <property type="match status" value="1"/>
</dbReference>
<dbReference type="InterPro" id="IPR038765">
    <property type="entry name" value="Papain-like_cys_pep_sf"/>
</dbReference>
<dbReference type="InterPro" id="IPR006311">
    <property type="entry name" value="TAT_signal"/>
</dbReference>
<dbReference type="InterPro" id="IPR015107">
    <property type="entry name" value="Transglut_prok"/>
</dbReference>
<dbReference type="InterPro" id="IPR037084">
    <property type="entry name" value="Transglut_prok_sf"/>
</dbReference>
<dbReference type="Pfam" id="PF09017">
    <property type="entry name" value="Transglut_prok"/>
    <property type="match status" value="1"/>
</dbReference>
<dbReference type="PIRSF" id="PIRSF037210">
    <property type="entry name" value="Transglut_prok"/>
    <property type="match status" value="1"/>
</dbReference>
<dbReference type="SUPFAM" id="SSF54001">
    <property type="entry name" value="Cysteine proteinases"/>
    <property type="match status" value="1"/>
</dbReference>
<dbReference type="PROSITE" id="PS51318">
    <property type="entry name" value="TAT"/>
    <property type="match status" value="1"/>
</dbReference>
<protein>
    <recommendedName>
        <fullName>Protein-glutamine gamma-glutamyltransferase</fullName>
        <ecNumber>2.3.2.13</ecNumber>
    </recommendedName>
    <alternativeName>
        <fullName>Transglutaminase</fullName>
        <shortName>TGase</shortName>
    </alternativeName>
</protein>
<proteinExistence type="inferred from homology"/>
<sequence length="416" mass="46394">MHKRRRLLAFATVGAVICTAGFTPSVSQAASSGDGEEKGSYAETHGLTADDVESINALNERALTLGQPGKPPKELPPSASAPSRAPSDDRETPPAEPLDRMPEAYRAYGGRATTVVNNYIRKWQQVYSHRDGKKQQMTEEQREKLSYGCVGVTWVNSGPYPTNRLAFASFDENKYKNDLKNTSPRPDETRAEFEGRIAKGSFDEGKGFKRARDVASVMNKALENAHDEGTYINNLKTELTNNNDALLREDSRSNFYSALRNTPSFKERDGGNYDPSKMKAVIYSKHFWSGQDQRGSSDKRKYGDPEAFRPDQGTGLVDMSKDRSIPRSPAKPGEGWVNFDYGWFGAQTEADADKTTWTHGDHYHAPNSDLGPMHVHESKFRKWSAGYADFDRGAYVITFIPKSWNTAPAKVEQGWP</sequence>
<accession>Q8GR90</accession>
<evidence type="ECO:0000250" key="1"/>
<evidence type="ECO:0000255" key="2">
    <source>
        <dbReference type="PROSITE-ProRule" id="PRU00648"/>
    </source>
</evidence>
<evidence type="ECO:0000256" key="3">
    <source>
        <dbReference type="SAM" id="MobiDB-lite"/>
    </source>
</evidence>
<evidence type="ECO:0000305" key="4"/>